<reference key="1">
    <citation type="submission" date="2007-08" db="EMBL/GenBank/DDBJ databases">
        <authorList>
            <consortium name="The Citrobacter koseri Genome Sequencing Project"/>
            <person name="McClelland M."/>
            <person name="Sanderson E.K."/>
            <person name="Porwollik S."/>
            <person name="Spieth J."/>
            <person name="Clifton W.S."/>
            <person name="Latreille P."/>
            <person name="Courtney L."/>
            <person name="Wang C."/>
            <person name="Pepin K."/>
            <person name="Bhonagiri V."/>
            <person name="Nash W."/>
            <person name="Johnson M."/>
            <person name="Thiruvilangam P."/>
            <person name="Wilson R."/>
        </authorList>
    </citation>
    <scope>NUCLEOTIDE SEQUENCE [LARGE SCALE GENOMIC DNA]</scope>
    <source>
        <strain>ATCC BAA-895 / CDC 4225-83 / SGSC4696</strain>
    </source>
</reference>
<name>MGSA_CITK8</name>
<gene>
    <name evidence="1" type="primary">mgsA</name>
    <name type="ordered locus">CKO_02104</name>
</gene>
<protein>
    <recommendedName>
        <fullName evidence="1">Methylglyoxal synthase</fullName>
        <shortName evidence="1">MGS</shortName>
        <ecNumber evidence="1">4.2.3.3</ecNumber>
    </recommendedName>
</protein>
<evidence type="ECO:0000255" key="1">
    <source>
        <dbReference type="HAMAP-Rule" id="MF_00549"/>
    </source>
</evidence>
<sequence>MELTTRTLPARKHIALVAHDHCKQMLMSWVERHQPLLEKHELYATGTTGNLIQRATGMNVNAMLSGPMGGDQQVGALISEGKIDVLIFFWDPLNAVPHDPDVKALLRLATVWNIPVATNASTADFIVQSPHFNDAVDILIPDYQRYLAERLK</sequence>
<organism>
    <name type="scientific">Citrobacter koseri (strain ATCC BAA-895 / CDC 4225-83 / SGSC4696)</name>
    <dbReference type="NCBI Taxonomy" id="290338"/>
    <lineage>
        <taxon>Bacteria</taxon>
        <taxon>Pseudomonadati</taxon>
        <taxon>Pseudomonadota</taxon>
        <taxon>Gammaproteobacteria</taxon>
        <taxon>Enterobacterales</taxon>
        <taxon>Enterobacteriaceae</taxon>
        <taxon>Citrobacter</taxon>
    </lineage>
</organism>
<accession>A8AIB5</accession>
<comment type="function">
    <text evidence="1">Catalyzes the formation of methylglyoxal from dihydroxyacetone phosphate.</text>
</comment>
<comment type="catalytic activity">
    <reaction evidence="1">
        <text>dihydroxyacetone phosphate = methylglyoxal + phosphate</text>
        <dbReference type="Rhea" id="RHEA:17937"/>
        <dbReference type="ChEBI" id="CHEBI:17158"/>
        <dbReference type="ChEBI" id="CHEBI:43474"/>
        <dbReference type="ChEBI" id="CHEBI:57642"/>
        <dbReference type="EC" id="4.2.3.3"/>
    </reaction>
</comment>
<comment type="similarity">
    <text evidence="1">Belongs to the methylglyoxal synthase family.</text>
</comment>
<feature type="chain" id="PRO_1000017802" description="Methylglyoxal synthase">
    <location>
        <begin position="1"/>
        <end position="152"/>
    </location>
</feature>
<feature type="domain" description="MGS-like" evidence="1">
    <location>
        <begin position="6"/>
        <end position="152"/>
    </location>
</feature>
<feature type="active site" description="Proton donor/acceptor" evidence="1">
    <location>
        <position position="71"/>
    </location>
</feature>
<feature type="binding site" evidence="1">
    <location>
        <position position="19"/>
    </location>
    <ligand>
        <name>substrate</name>
    </ligand>
</feature>
<feature type="binding site" evidence="1">
    <location>
        <position position="23"/>
    </location>
    <ligand>
        <name>substrate</name>
    </ligand>
</feature>
<feature type="binding site" evidence="1">
    <location>
        <begin position="45"/>
        <end position="48"/>
    </location>
    <ligand>
        <name>substrate</name>
    </ligand>
</feature>
<feature type="binding site" evidence="1">
    <location>
        <begin position="65"/>
        <end position="66"/>
    </location>
    <ligand>
        <name>substrate</name>
    </ligand>
</feature>
<feature type="binding site" evidence="1">
    <location>
        <position position="98"/>
    </location>
    <ligand>
        <name>substrate</name>
    </ligand>
</feature>
<keyword id="KW-0456">Lyase</keyword>
<keyword id="KW-1185">Reference proteome</keyword>
<proteinExistence type="inferred from homology"/>
<dbReference type="EC" id="4.2.3.3" evidence="1"/>
<dbReference type="EMBL" id="CP000822">
    <property type="protein sequence ID" value="ABV13228.1"/>
    <property type="molecule type" value="Genomic_DNA"/>
</dbReference>
<dbReference type="RefSeq" id="WP_012132960.1">
    <property type="nucleotide sequence ID" value="NC_009792.1"/>
</dbReference>
<dbReference type="SMR" id="A8AIB5"/>
<dbReference type="STRING" id="290338.CKO_02104"/>
<dbReference type="GeneID" id="45136052"/>
<dbReference type="KEGG" id="cko:CKO_02104"/>
<dbReference type="HOGENOM" id="CLU_120420_0_1_6"/>
<dbReference type="OrthoDB" id="9787147at2"/>
<dbReference type="Proteomes" id="UP000008148">
    <property type="component" value="Chromosome"/>
</dbReference>
<dbReference type="GO" id="GO:0005829">
    <property type="term" value="C:cytosol"/>
    <property type="evidence" value="ECO:0007669"/>
    <property type="project" value="TreeGrafter"/>
</dbReference>
<dbReference type="GO" id="GO:0008929">
    <property type="term" value="F:methylglyoxal synthase activity"/>
    <property type="evidence" value="ECO:0007669"/>
    <property type="project" value="UniProtKB-UniRule"/>
</dbReference>
<dbReference type="GO" id="GO:0019242">
    <property type="term" value="P:methylglyoxal biosynthetic process"/>
    <property type="evidence" value="ECO:0007669"/>
    <property type="project" value="UniProtKB-UniRule"/>
</dbReference>
<dbReference type="CDD" id="cd01422">
    <property type="entry name" value="MGS"/>
    <property type="match status" value="1"/>
</dbReference>
<dbReference type="FunFam" id="3.40.50.1380:FF:000002">
    <property type="entry name" value="Methylglyoxal synthase"/>
    <property type="match status" value="1"/>
</dbReference>
<dbReference type="Gene3D" id="3.40.50.1380">
    <property type="entry name" value="Methylglyoxal synthase-like domain"/>
    <property type="match status" value="1"/>
</dbReference>
<dbReference type="HAMAP" id="MF_00549">
    <property type="entry name" value="Methylglyoxal_synth"/>
    <property type="match status" value="1"/>
</dbReference>
<dbReference type="InterPro" id="IPR004363">
    <property type="entry name" value="Methylgl_synth"/>
</dbReference>
<dbReference type="InterPro" id="IPR018148">
    <property type="entry name" value="Methylglyoxal_synth_AS"/>
</dbReference>
<dbReference type="InterPro" id="IPR011607">
    <property type="entry name" value="MGS-like_dom"/>
</dbReference>
<dbReference type="InterPro" id="IPR036914">
    <property type="entry name" value="MGS-like_dom_sf"/>
</dbReference>
<dbReference type="NCBIfam" id="TIGR00160">
    <property type="entry name" value="MGSA"/>
    <property type="match status" value="1"/>
</dbReference>
<dbReference type="NCBIfam" id="NF003559">
    <property type="entry name" value="PRK05234.1"/>
    <property type="match status" value="1"/>
</dbReference>
<dbReference type="PANTHER" id="PTHR30492">
    <property type="entry name" value="METHYLGLYOXAL SYNTHASE"/>
    <property type="match status" value="1"/>
</dbReference>
<dbReference type="PANTHER" id="PTHR30492:SF0">
    <property type="entry name" value="METHYLGLYOXAL SYNTHASE"/>
    <property type="match status" value="1"/>
</dbReference>
<dbReference type="Pfam" id="PF02142">
    <property type="entry name" value="MGS"/>
    <property type="match status" value="1"/>
</dbReference>
<dbReference type="PIRSF" id="PIRSF006614">
    <property type="entry name" value="Methylglyox_syn"/>
    <property type="match status" value="1"/>
</dbReference>
<dbReference type="SMART" id="SM00851">
    <property type="entry name" value="MGS"/>
    <property type="match status" value="1"/>
</dbReference>
<dbReference type="SUPFAM" id="SSF52335">
    <property type="entry name" value="Methylglyoxal synthase-like"/>
    <property type="match status" value="1"/>
</dbReference>
<dbReference type="PROSITE" id="PS01335">
    <property type="entry name" value="METHYLGLYOXAL_SYNTH"/>
    <property type="match status" value="1"/>
</dbReference>
<dbReference type="PROSITE" id="PS51855">
    <property type="entry name" value="MGS"/>
    <property type="match status" value="1"/>
</dbReference>